<evidence type="ECO:0000256" key="1">
    <source>
        <dbReference type="SAM" id="MobiDB-lite"/>
    </source>
</evidence>
<evidence type="ECO:0000305" key="2"/>
<dbReference type="EMBL" id="FO081697">
    <property type="protein sequence ID" value="CCD73716.1"/>
    <property type="molecule type" value="Genomic_DNA"/>
</dbReference>
<dbReference type="PIR" id="A88197">
    <property type="entry name" value="A88197"/>
</dbReference>
<dbReference type="RefSeq" id="NP_495447.1">
    <property type="nucleotide sequence ID" value="NM_063046.7"/>
</dbReference>
<dbReference type="SMR" id="Q23402"/>
<dbReference type="BioGRID" id="39490">
    <property type="interactions" value="10"/>
</dbReference>
<dbReference type="FunCoup" id="Q23402">
    <property type="interactions" value="430"/>
</dbReference>
<dbReference type="IntAct" id="Q23402">
    <property type="interactions" value="1"/>
</dbReference>
<dbReference type="MINT" id="Q23402"/>
<dbReference type="STRING" id="6239.ZK1127.4.1"/>
<dbReference type="PaxDb" id="6239-ZK1127.4.1"/>
<dbReference type="PeptideAtlas" id="Q23402"/>
<dbReference type="EnsemblMetazoa" id="ZK1127.4.1">
    <property type="protein sequence ID" value="ZK1127.4.1"/>
    <property type="gene ID" value="WBGene00022851"/>
</dbReference>
<dbReference type="GeneID" id="174153"/>
<dbReference type="KEGG" id="cel:CELE_ZK1127.4"/>
<dbReference type="UCSC" id="ZK1127.4">
    <property type="organism name" value="c. elegans"/>
</dbReference>
<dbReference type="AGR" id="WB:WBGene00022851"/>
<dbReference type="CTD" id="174153"/>
<dbReference type="WormBase" id="ZK1127.4">
    <property type="protein sequence ID" value="CE07643"/>
    <property type="gene ID" value="WBGene00022851"/>
</dbReference>
<dbReference type="eggNOG" id="KOG3034">
    <property type="taxonomic scope" value="Eukaryota"/>
</dbReference>
<dbReference type="GeneTree" id="ENSGT00390000000696"/>
<dbReference type="HOGENOM" id="CLU_807086_0_0_1"/>
<dbReference type="InParanoid" id="Q23402"/>
<dbReference type="OMA" id="FFDYPVH"/>
<dbReference type="OrthoDB" id="27543at2759"/>
<dbReference type="PRO" id="PR:Q23402"/>
<dbReference type="Proteomes" id="UP000001940">
    <property type="component" value="Chromosome II"/>
</dbReference>
<dbReference type="Bgee" id="WBGene00022851">
    <property type="expression patterns" value="Expressed in germ line (C elegans) and 4 other cell types or tissues"/>
</dbReference>
<dbReference type="GO" id="GO:0005634">
    <property type="term" value="C:nucleus"/>
    <property type="evidence" value="ECO:0000318"/>
    <property type="project" value="GO_Central"/>
</dbReference>
<dbReference type="InterPro" id="IPR025602">
    <property type="entry name" value="BCP1_family"/>
</dbReference>
<dbReference type="PANTHER" id="PTHR13261">
    <property type="entry name" value="BRCA2 AND CDKN1A INTERACTING PROTEIN"/>
    <property type="match status" value="1"/>
</dbReference>
<dbReference type="PANTHER" id="PTHR13261:SF0">
    <property type="entry name" value="BRCA2 AND CDKN1A-INTERACTING PROTEIN"/>
    <property type="match status" value="1"/>
</dbReference>
<dbReference type="Pfam" id="PF13862">
    <property type="entry name" value="BCCIP"/>
    <property type="match status" value="1"/>
</dbReference>
<sequence length="349" mass="39545">MGRVFKKKGGAKREAEEEKQEELVMRKKLRKEEEPEPVEDVEEDEDVSDEDDEDIDDEEEDEDEQNIMDFDFEAYPPSEDDRDGIVNMLTQTFLRTDIDLKAMSEGIIAKAPHGVVLTQAYDDEETEEDYMAYGLCTTVPLNDNKDDAPKFIKDLFTYVLNRAKKGAPTEIYKKIEEIQVSGDGKSALFVNERLLNFPTIVVPQIFGSIREDLSGFETKYKTIIYIQKLRIVETDGSEAKVGASSNGSSGVAGKKKGKMGKAEKKRAAAAALANAEIEFDNPEDRVLFEIKEGKEIHFDYPVHMDVEPGSKFHSTEKDGKKWNPFRRLVIMDDKRFDAFLKKGSDGIII</sequence>
<keyword id="KW-1185">Reference proteome</keyword>
<accession>Q23402</accession>
<proteinExistence type="inferred from homology"/>
<name>BCCIP_CAEEL</name>
<protein>
    <recommendedName>
        <fullName>Protein BCCIP homolog</fullName>
    </recommendedName>
</protein>
<gene>
    <name type="ORF">ZK1127.4</name>
</gene>
<organism>
    <name type="scientific">Caenorhabditis elegans</name>
    <dbReference type="NCBI Taxonomy" id="6239"/>
    <lineage>
        <taxon>Eukaryota</taxon>
        <taxon>Metazoa</taxon>
        <taxon>Ecdysozoa</taxon>
        <taxon>Nematoda</taxon>
        <taxon>Chromadorea</taxon>
        <taxon>Rhabditida</taxon>
        <taxon>Rhabditina</taxon>
        <taxon>Rhabditomorpha</taxon>
        <taxon>Rhabditoidea</taxon>
        <taxon>Rhabditidae</taxon>
        <taxon>Peloderinae</taxon>
        <taxon>Caenorhabditis</taxon>
    </lineage>
</organism>
<comment type="similarity">
    <text evidence="2">Belongs to the BCP1 family.</text>
</comment>
<reference key="1">
    <citation type="journal article" date="1998" name="Science">
        <title>Genome sequence of the nematode C. elegans: a platform for investigating biology.</title>
        <authorList>
            <consortium name="The C. elegans sequencing consortium"/>
        </authorList>
    </citation>
    <scope>NUCLEOTIDE SEQUENCE [LARGE SCALE GENOMIC DNA]</scope>
    <source>
        <strain>Bristol N2</strain>
    </source>
</reference>
<feature type="chain" id="PRO_0000249694" description="Protein BCCIP homolog">
    <location>
        <begin position="1"/>
        <end position="349"/>
    </location>
</feature>
<feature type="region of interest" description="Disordered" evidence="1">
    <location>
        <begin position="1"/>
        <end position="65"/>
    </location>
</feature>
<feature type="compositionally biased region" description="Basic residues" evidence="1">
    <location>
        <begin position="1"/>
        <end position="10"/>
    </location>
</feature>
<feature type="compositionally biased region" description="Basic and acidic residues" evidence="1">
    <location>
        <begin position="11"/>
        <end position="33"/>
    </location>
</feature>
<feature type="compositionally biased region" description="Acidic residues" evidence="1">
    <location>
        <begin position="34"/>
        <end position="65"/>
    </location>
</feature>